<accession>P11356</accession>
<organism>
    <name type="scientific">Candida tropicalis</name>
    <name type="common">Yeast</name>
    <dbReference type="NCBI Taxonomy" id="5482"/>
    <lineage>
        <taxon>Eukaryota</taxon>
        <taxon>Fungi</taxon>
        <taxon>Dikarya</taxon>
        <taxon>Ascomycota</taxon>
        <taxon>Saccharomycotina</taxon>
        <taxon>Pichiomycetes</taxon>
        <taxon>Debaryomycetaceae</taxon>
        <taxon>Candida/Lodderomyces clade</taxon>
        <taxon>Candida</taxon>
    </lineage>
</organism>
<proteinExistence type="inferred from homology"/>
<name>ACOX2_CANTR</name>
<feature type="initiator methionine" description="Removed">
    <location>
        <position position="1"/>
    </location>
</feature>
<feature type="chain" id="PRO_0000204695" description="Acyl-coenzyme A oxidase 2">
    <location>
        <begin position="2"/>
        <end position="724"/>
    </location>
</feature>
<feature type="region of interest" description="Disordered" evidence="1">
    <location>
        <begin position="1"/>
        <end position="48"/>
    </location>
</feature>
<feature type="compositionally biased region" description="Basic and acidic residues" evidence="1">
    <location>
        <begin position="9"/>
        <end position="21"/>
    </location>
</feature>
<feature type="compositionally biased region" description="Basic and acidic residues" evidence="1">
    <location>
        <begin position="37"/>
        <end position="48"/>
    </location>
</feature>
<sequence>MAMLSQPNDGHDHPEKKDPDTTPKQVAGVISSQDPPHPAKDVAEERARTDWDLKEMHEFLEGDEAKSEQILRLYQSIERDPILQTRPEQFDYTQKQERELVANRINQMTKFLETEPYGKFRRRLQLMTVIDPSLGIRMLVNIGLFLNCVRGNGTQKQFDFWSNKKEAGIVKQLYGCFGMTELGHGSNVAGCETTATFDEKTDEFIIDTPHIGATKWWIGGAAHSATHTVCYARLIVKDVDYGVKTFIVPLRDSRHSLLPGIAIGDIGAKMGRQGVDNGWIQFTEVRVPRFFMLQRWCKVDRQGNVTLPPLEQLSYISLLEGRVGMATDSYRIGARYTTIALRYAVGRRQFSKKAGEPETKLIDYTLHQRRLLPYLALTYAAAVGTDRLERQHEELLANLDIALAKKDKLLLKNTITGTKSMFVDSGSLKSTLTWLAADLINETRQACGGHGYSSYNGFGKTYDDWVVQCTWEGDNNVLAMSAGKTIIKTVQQVLNGKELKDSTLEFLNAAPELSKAKKAVIRIRDHVDDVDRVLKAIAGLISKFSKDLIPISYQSWDSIGAQRVILSKLRCHYYLLETFNERLNDKIKAKSPARPHLENIIKLYYVTNILGPFIDEFLRFGVISPQVAKYITYEYPQKLCANIRPYVIGLTDSFQQPDNFINSLIGKYDGNIYTNYLESVKDVNDPSNYKAPYSEALEAMLNRSALENRERSERGKAAADILSK</sequence>
<evidence type="ECO:0000256" key="1">
    <source>
        <dbReference type="SAM" id="MobiDB-lite"/>
    </source>
</evidence>
<evidence type="ECO:0000305" key="2"/>
<reference key="1">
    <citation type="journal article" date="1987" name="Gene">
        <title>Peroxisomal acyl-coenzyme A oxidase multigene family of the yeast Candida tropicalis; nucleotide sequence of a third gene and its protein product.</title>
        <authorList>
            <person name="Okazaki K."/>
            <person name="Tan H."/>
            <person name="Fukui S."/>
            <person name="Kubota I."/>
            <person name="Kamiryo T."/>
        </authorList>
    </citation>
    <scope>NUCLEOTIDE SEQUENCE [GENOMIC DNA]</scope>
</reference>
<dbReference type="EC" id="1.3.3.6"/>
<dbReference type="EMBL" id="M18259">
    <property type="protein sequence ID" value="AAA34361.1"/>
    <property type="molecule type" value="Genomic_DNA"/>
</dbReference>
<dbReference type="PIR" id="A27331">
    <property type="entry name" value="OXCKP2"/>
</dbReference>
<dbReference type="SMR" id="P11356"/>
<dbReference type="VEuPathDB" id="FungiDB:CTMYA2_049320"/>
<dbReference type="VEuPathDB" id="FungiDB:CTRG_02374"/>
<dbReference type="SABIO-RK" id="P11356"/>
<dbReference type="UniPathway" id="UPA00661"/>
<dbReference type="GO" id="GO:0005777">
    <property type="term" value="C:peroxisome"/>
    <property type="evidence" value="ECO:0007669"/>
    <property type="project" value="UniProtKB-SubCell"/>
</dbReference>
<dbReference type="GO" id="GO:0003997">
    <property type="term" value="F:acyl-CoA oxidase activity"/>
    <property type="evidence" value="ECO:0007669"/>
    <property type="project" value="UniProtKB-EC"/>
</dbReference>
<dbReference type="GO" id="GO:0071949">
    <property type="term" value="F:FAD binding"/>
    <property type="evidence" value="ECO:0007669"/>
    <property type="project" value="InterPro"/>
</dbReference>
<dbReference type="GO" id="GO:0005504">
    <property type="term" value="F:fatty acid binding"/>
    <property type="evidence" value="ECO:0007669"/>
    <property type="project" value="TreeGrafter"/>
</dbReference>
<dbReference type="GO" id="GO:0033540">
    <property type="term" value="P:fatty acid beta-oxidation using acyl-CoA oxidase"/>
    <property type="evidence" value="ECO:0007669"/>
    <property type="project" value="UniProtKB-UniPathway"/>
</dbReference>
<dbReference type="GO" id="GO:0055088">
    <property type="term" value="P:lipid homeostasis"/>
    <property type="evidence" value="ECO:0007669"/>
    <property type="project" value="TreeGrafter"/>
</dbReference>
<dbReference type="FunFam" id="1.10.540.10:FF:000018">
    <property type="entry name" value="Acyl-coenzyme A oxidase"/>
    <property type="match status" value="1"/>
</dbReference>
<dbReference type="FunFam" id="1.20.140.10:FF:000015">
    <property type="entry name" value="Acyl-coenzyme A oxidase"/>
    <property type="match status" value="1"/>
</dbReference>
<dbReference type="FunFam" id="1.20.140.10:FF:000041">
    <property type="entry name" value="Acyl-coenzyme A oxidase"/>
    <property type="match status" value="1"/>
</dbReference>
<dbReference type="FunFam" id="2.40.110.10:FF:000003">
    <property type="entry name" value="Acyl-coenzyme A oxidase"/>
    <property type="match status" value="1"/>
</dbReference>
<dbReference type="Gene3D" id="1.10.540.10">
    <property type="entry name" value="Acyl-CoA dehydrogenase/oxidase, N-terminal domain"/>
    <property type="match status" value="1"/>
</dbReference>
<dbReference type="Gene3D" id="2.40.110.10">
    <property type="entry name" value="Butyryl-CoA Dehydrogenase, subunit A, domain 2"/>
    <property type="match status" value="1"/>
</dbReference>
<dbReference type="Gene3D" id="1.20.140.10">
    <property type="entry name" value="Butyryl-CoA Dehydrogenase, subunit A, domain 3"/>
    <property type="match status" value="2"/>
</dbReference>
<dbReference type="InterPro" id="IPR055060">
    <property type="entry name" value="ACOX_C_alpha1"/>
</dbReference>
<dbReference type="InterPro" id="IPR029320">
    <property type="entry name" value="Acyl-CoA_ox_N"/>
</dbReference>
<dbReference type="InterPro" id="IPR006091">
    <property type="entry name" value="Acyl-CoA_Oxase/DH_mid-dom"/>
</dbReference>
<dbReference type="InterPro" id="IPR046373">
    <property type="entry name" value="Acyl-CoA_Oxase/DH_mid-dom_sf"/>
</dbReference>
<dbReference type="InterPro" id="IPR012258">
    <property type="entry name" value="Acyl-CoA_oxidase"/>
</dbReference>
<dbReference type="InterPro" id="IPR002655">
    <property type="entry name" value="Acyl-CoA_oxidase_C"/>
</dbReference>
<dbReference type="InterPro" id="IPR036250">
    <property type="entry name" value="AcylCo_DH-like_C"/>
</dbReference>
<dbReference type="InterPro" id="IPR037069">
    <property type="entry name" value="AcylCoA_DH/ox_N_sf"/>
</dbReference>
<dbReference type="InterPro" id="IPR009100">
    <property type="entry name" value="AcylCoA_DH/oxidase_NM_dom_sf"/>
</dbReference>
<dbReference type="PANTHER" id="PTHR10909:SF352">
    <property type="entry name" value="ACYL-COENZYME A OXIDASE-LIKE PROTEIN"/>
    <property type="match status" value="1"/>
</dbReference>
<dbReference type="PANTHER" id="PTHR10909">
    <property type="entry name" value="ELECTRON TRANSPORT OXIDOREDUCTASE"/>
    <property type="match status" value="1"/>
</dbReference>
<dbReference type="Pfam" id="PF01756">
    <property type="entry name" value="ACOX"/>
    <property type="match status" value="1"/>
</dbReference>
<dbReference type="Pfam" id="PF22924">
    <property type="entry name" value="ACOX_C_alpha1"/>
    <property type="match status" value="1"/>
</dbReference>
<dbReference type="Pfam" id="PF02770">
    <property type="entry name" value="Acyl-CoA_dh_M"/>
    <property type="match status" value="1"/>
</dbReference>
<dbReference type="Pfam" id="PF14749">
    <property type="entry name" value="Acyl-CoA_ox_N"/>
    <property type="match status" value="1"/>
</dbReference>
<dbReference type="PIRSF" id="PIRSF000168">
    <property type="entry name" value="Acyl-CoA_oxidase"/>
    <property type="match status" value="1"/>
</dbReference>
<dbReference type="SUPFAM" id="SSF47203">
    <property type="entry name" value="Acyl-CoA dehydrogenase C-terminal domain-like"/>
    <property type="match status" value="2"/>
</dbReference>
<dbReference type="SUPFAM" id="SSF56645">
    <property type="entry name" value="Acyl-CoA dehydrogenase NM domain-like"/>
    <property type="match status" value="1"/>
</dbReference>
<protein>
    <recommendedName>
        <fullName>Acyl-coenzyme A oxidase 2</fullName>
        <shortName>Acyl-CoA oxidase 2</shortName>
        <ecNumber>1.3.3.6</ecNumber>
    </recommendedName>
    <alternativeName>
        <fullName>PXP-2</fullName>
    </alternativeName>
</protein>
<comment type="catalytic activity">
    <reaction>
        <text>a 2,3-saturated acyl-CoA + O2 = a (2E)-enoyl-CoA + H2O2</text>
        <dbReference type="Rhea" id="RHEA:38959"/>
        <dbReference type="ChEBI" id="CHEBI:15379"/>
        <dbReference type="ChEBI" id="CHEBI:16240"/>
        <dbReference type="ChEBI" id="CHEBI:58856"/>
        <dbReference type="ChEBI" id="CHEBI:65111"/>
        <dbReference type="EC" id="1.3.3.6"/>
    </reaction>
</comment>
<comment type="cofactor">
    <cofactor>
        <name>FAD</name>
        <dbReference type="ChEBI" id="CHEBI:57692"/>
    </cofactor>
</comment>
<comment type="pathway">
    <text>Lipid metabolism; peroxisomal fatty acid beta-oxidation.</text>
</comment>
<comment type="subcellular location">
    <subcellularLocation>
        <location>Peroxisome</location>
    </subcellularLocation>
</comment>
<comment type="similarity">
    <text evidence="2">Belongs to the acyl-CoA oxidase family.</text>
</comment>
<gene>
    <name type="primary">POX2</name>
</gene>
<keyword id="KW-0274">FAD</keyword>
<keyword id="KW-0276">Fatty acid metabolism</keyword>
<keyword id="KW-0285">Flavoprotein</keyword>
<keyword id="KW-0443">Lipid metabolism</keyword>
<keyword id="KW-0560">Oxidoreductase</keyword>
<keyword id="KW-0576">Peroxisome</keyword>